<dbReference type="EC" id="4.2.3.5" evidence="1"/>
<dbReference type="EMBL" id="CP000529">
    <property type="protein sequence ID" value="ABM38047.1"/>
    <property type="molecule type" value="Genomic_DNA"/>
</dbReference>
<dbReference type="RefSeq" id="WP_011802124.1">
    <property type="nucleotide sequence ID" value="NC_008781.1"/>
</dbReference>
<dbReference type="SMR" id="A1VQW9"/>
<dbReference type="STRING" id="365044.Pnap_2745"/>
<dbReference type="KEGG" id="pna:Pnap_2745"/>
<dbReference type="eggNOG" id="COG0082">
    <property type="taxonomic scope" value="Bacteria"/>
</dbReference>
<dbReference type="HOGENOM" id="CLU_034547_0_2_4"/>
<dbReference type="OrthoDB" id="9771806at2"/>
<dbReference type="UniPathway" id="UPA00053">
    <property type="reaction ID" value="UER00090"/>
</dbReference>
<dbReference type="Proteomes" id="UP000000644">
    <property type="component" value="Chromosome"/>
</dbReference>
<dbReference type="GO" id="GO:0005829">
    <property type="term" value="C:cytosol"/>
    <property type="evidence" value="ECO:0007669"/>
    <property type="project" value="TreeGrafter"/>
</dbReference>
<dbReference type="GO" id="GO:0004107">
    <property type="term" value="F:chorismate synthase activity"/>
    <property type="evidence" value="ECO:0007669"/>
    <property type="project" value="UniProtKB-UniRule"/>
</dbReference>
<dbReference type="GO" id="GO:0010181">
    <property type="term" value="F:FMN binding"/>
    <property type="evidence" value="ECO:0007669"/>
    <property type="project" value="TreeGrafter"/>
</dbReference>
<dbReference type="GO" id="GO:0008652">
    <property type="term" value="P:amino acid biosynthetic process"/>
    <property type="evidence" value="ECO:0007669"/>
    <property type="project" value="UniProtKB-KW"/>
</dbReference>
<dbReference type="GO" id="GO:0009073">
    <property type="term" value="P:aromatic amino acid family biosynthetic process"/>
    <property type="evidence" value="ECO:0007669"/>
    <property type="project" value="UniProtKB-KW"/>
</dbReference>
<dbReference type="GO" id="GO:0009423">
    <property type="term" value="P:chorismate biosynthetic process"/>
    <property type="evidence" value="ECO:0007669"/>
    <property type="project" value="UniProtKB-UniRule"/>
</dbReference>
<dbReference type="CDD" id="cd07304">
    <property type="entry name" value="Chorismate_synthase"/>
    <property type="match status" value="1"/>
</dbReference>
<dbReference type="FunFam" id="3.60.150.10:FF:000001">
    <property type="entry name" value="Chorismate synthase"/>
    <property type="match status" value="1"/>
</dbReference>
<dbReference type="Gene3D" id="3.60.150.10">
    <property type="entry name" value="Chorismate synthase AroC"/>
    <property type="match status" value="1"/>
</dbReference>
<dbReference type="HAMAP" id="MF_00300">
    <property type="entry name" value="Chorismate_synth"/>
    <property type="match status" value="1"/>
</dbReference>
<dbReference type="InterPro" id="IPR000453">
    <property type="entry name" value="Chorismate_synth"/>
</dbReference>
<dbReference type="InterPro" id="IPR035904">
    <property type="entry name" value="Chorismate_synth_AroC_sf"/>
</dbReference>
<dbReference type="InterPro" id="IPR020541">
    <property type="entry name" value="Chorismate_synthase_CS"/>
</dbReference>
<dbReference type="NCBIfam" id="TIGR00033">
    <property type="entry name" value="aroC"/>
    <property type="match status" value="1"/>
</dbReference>
<dbReference type="NCBIfam" id="NF003793">
    <property type="entry name" value="PRK05382.1"/>
    <property type="match status" value="1"/>
</dbReference>
<dbReference type="PANTHER" id="PTHR21085">
    <property type="entry name" value="CHORISMATE SYNTHASE"/>
    <property type="match status" value="1"/>
</dbReference>
<dbReference type="PANTHER" id="PTHR21085:SF0">
    <property type="entry name" value="CHORISMATE SYNTHASE"/>
    <property type="match status" value="1"/>
</dbReference>
<dbReference type="Pfam" id="PF01264">
    <property type="entry name" value="Chorismate_synt"/>
    <property type="match status" value="1"/>
</dbReference>
<dbReference type="PIRSF" id="PIRSF001456">
    <property type="entry name" value="Chorismate_synth"/>
    <property type="match status" value="1"/>
</dbReference>
<dbReference type="SUPFAM" id="SSF103263">
    <property type="entry name" value="Chorismate synthase, AroC"/>
    <property type="match status" value="1"/>
</dbReference>
<dbReference type="PROSITE" id="PS00787">
    <property type="entry name" value="CHORISMATE_SYNTHASE_1"/>
    <property type="match status" value="1"/>
</dbReference>
<dbReference type="PROSITE" id="PS00788">
    <property type="entry name" value="CHORISMATE_SYNTHASE_2"/>
    <property type="match status" value="1"/>
</dbReference>
<dbReference type="PROSITE" id="PS00789">
    <property type="entry name" value="CHORISMATE_SYNTHASE_3"/>
    <property type="match status" value="1"/>
</dbReference>
<accession>A1VQW9</accession>
<evidence type="ECO:0000255" key="1">
    <source>
        <dbReference type="HAMAP-Rule" id="MF_00300"/>
    </source>
</evidence>
<proteinExistence type="inferred from homology"/>
<name>AROC_POLNA</name>
<comment type="function">
    <text evidence="1">Catalyzes the anti-1,4-elimination of the C-3 phosphate and the C-6 proR hydrogen from 5-enolpyruvylshikimate-3-phosphate (EPSP) to yield chorismate, which is the branch point compound that serves as the starting substrate for the three terminal pathways of aromatic amino acid biosynthesis. This reaction introduces a second double bond into the aromatic ring system.</text>
</comment>
<comment type="catalytic activity">
    <reaction evidence="1">
        <text>5-O-(1-carboxyvinyl)-3-phosphoshikimate = chorismate + phosphate</text>
        <dbReference type="Rhea" id="RHEA:21020"/>
        <dbReference type="ChEBI" id="CHEBI:29748"/>
        <dbReference type="ChEBI" id="CHEBI:43474"/>
        <dbReference type="ChEBI" id="CHEBI:57701"/>
        <dbReference type="EC" id="4.2.3.5"/>
    </reaction>
</comment>
<comment type="cofactor">
    <cofactor evidence="1">
        <name>FMNH2</name>
        <dbReference type="ChEBI" id="CHEBI:57618"/>
    </cofactor>
    <text evidence="1">Reduced FMN (FMNH(2)).</text>
</comment>
<comment type="pathway">
    <text evidence="1">Metabolic intermediate biosynthesis; chorismate biosynthesis; chorismate from D-erythrose 4-phosphate and phosphoenolpyruvate: step 7/7.</text>
</comment>
<comment type="subunit">
    <text evidence="1">Homotetramer.</text>
</comment>
<comment type="similarity">
    <text evidence="1">Belongs to the chorismate synthase family.</text>
</comment>
<protein>
    <recommendedName>
        <fullName evidence="1">Chorismate synthase</fullName>
        <shortName evidence="1">CS</shortName>
        <ecNumber evidence="1">4.2.3.5</ecNumber>
    </recommendedName>
    <alternativeName>
        <fullName evidence="1">5-enolpyruvylshikimate-3-phosphate phospholyase</fullName>
    </alternativeName>
</protein>
<organism>
    <name type="scientific">Polaromonas naphthalenivorans (strain CJ2)</name>
    <dbReference type="NCBI Taxonomy" id="365044"/>
    <lineage>
        <taxon>Bacteria</taxon>
        <taxon>Pseudomonadati</taxon>
        <taxon>Pseudomonadota</taxon>
        <taxon>Betaproteobacteria</taxon>
        <taxon>Burkholderiales</taxon>
        <taxon>Comamonadaceae</taxon>
        <taxon>Polaromonas</taxon>
    </lineage>
</organism>
<sequence>MSGNTFGNLFAVTNFGESHGPAIGCVIDGCPPGMALSEADIQGDLDRRRPGTSRHVTQRNEPDAVEILSGVYEGKTTGTPICLLIKNTDQRSKDYGNILDTFRPGHADYTYLHKYGLRDPRGGGRSSARLTAPMVAAGAVAKKWLFEKYGTTFRGCMAQIGEAMIPFESWEHVANNPFFAPVADVSNLENYMDALRKAGDSCGARIRVVASGVPVGLGEPLFDKLDADIAFAMMGINAVKGVEIGAGFASVTQRGTTHGDSLSPEGFMSNNAGGVLGGISTGQDLEVSIAIKPTSSIITPRQSIDTAGNPAEVVTKGRHDPCVGIRATPIAEAMLALVVMEHALRQRAQCGDVKVSTPDIMRSRG</sequence>
<feature type="chain" id="PRO_1000022520" description="Chorismate synthase">
    <location>
        <begin position="1"/>
        <end position="365"/>
    </location>
</feature>
<feature type="binding site" evidence="1">
    <location>
        <position position="48"/>
    </location>
    <ligand>
        <name>NADP(+)</name>
        <dbReference type="ChEBI" id="CHEBI:58349"/>
    </ligand>
</feature>
<feature type="binding site" evidence="1">
    <location>
        <position position="54"/>
    </location>
    <ligand>
        <name>NADP(+)</name>
        <dbReference type="ChEBI" id="CHEBI:58349"/>
    </ligand>
</feature>
<feature type="binding site" evidence="1">
    <location>
        <begin position="125"/>
        <end position="127"/>
    </location>
    <ligand>
        <name>FMN</name>
        <dbReference type="ChEBI" id="CHEBI:58210"/>
    </ligand>
</feature>
<feature type="binding site" evidence="1">
    <location>
        <begin position="237"/>
        <end position="238"/>
    </location>
    <ligand>
        <name>FMN</name>
        <dbReference type="ChEBI" id="CHEBI:58210"/>
    </ligand>
</feature>
<feature type="binding site" evidence="1">
    <location>
        <position position="277"/>
    </location>
    <ligand>
        <name>FMN</name>
        <dbReference type="ChEBI" id="CHEBI:58210"/>
    </ligand>
</feature>
<feature type="binding site" evidence="1">
    <location>
        <begin position="292"/>
        <end position="296"/>
    </location>
    <ligand>
        <name>FMN</name>
        <dbReference type="ChEBI" id="CHEBI:58210"/>
    </ligand>
</feature>
<feature type="binding site" evidence="1">
    <location>
        <position position="318"/>
    </location>
    <ligand>
        <name>FMN</name>
        <dbReference type="ChEBI" id="CHEBI:58210"/>
    </ligand>
</feature>
<reference key="1">
    <citation type="journal article" date="2009" name="Environ. Microbiol.">
        <title>The genome of Polaromonas naphthalenivorans strain CJ2, isolated from coal tar-contaminated sediment, reveals physiological and metabolic versatility and evolution through extensive horizontal gene transfer.</title>
        <authorList>
            <person name="Yagi J.M."/>
            <person name="Sims D."/>
            <person name="Brettin T."/>
            <person name="Bruce D."/>
            <person name="Madsen E.L."/>
        </authorList>
    </citation>
    <scope>NUCLEOTIDE SEQUENCE [LARGE SCALE GENOMIC DNA]</scope>
    <source>
        <strain>CJ2</strain>
    </source>
</reference>
<keyword id="KW-0028">Amino-acid biosynthesis</keyword>
<keyword id="KW-0057">Aromatic amino acid biosynthesis</keyword>
<keyword id="KW-0274">FAD</keyword>
<keyword id="KW-0285">Flavoprotein</keyword>
<keyword id="KW-0288">FMN</keyword>
<keyword id="KW-0456">Lyase</keyword>
<keyword id="KW-0521">NADP</keyword>
<keyword id="KW-1185">Reference proteome</keyword>
<gene>
    <name evidence="1" type="primary">aroC</name>
    <name type="ordered locus">Pnap_2745</name>
</gene>